<feature type="chain" id="PRO_0000254053" description="Coiled-coil domain-containing protein 116">
    <location>
        <begin position="1"/>
        <end position="528"/>
    </location>
</feature>
<feature type="region of interest" description="Disordered" evidence="4">
    <location>
        <begin position="43"/>
        <end position="68"/>
    </location>
</feature>
<feature type="region of interest" description="Disordered" evidence="4">
    <location>
        <begin position="335"/>
        <end position="444"/>
    </location>
</feature>
<feature type="region of interest" description="Disordered" evidence="4">
    <location>
        <begin position="497"/>
        <end position="528"/>
    </location>
</feature>
<feature type="coiled-coil region" evidence="3">
    <location>
        <begin position="81"/>
        <end position="104"/>
    </location>
</feature>
<feature type="compositionally biased region" description="Polar residues" evidence="4">
    <location>
        <begin position="51"/>
        <end position="60"/>
    </location>
</feature>
<feature type="compositionally biased region" description="Polar residues" evidence="4">
    <location>
        <begin position="363"/>
        <end position="378"/>
    </location>
</feature>
<feature type="compositionally biased region" description="Basic and acidic residues" evidence="4">
    <location>
        <begin position="419"/>
        <end position="429"/>
    </location>
</feature>
<feature type="compositionally biased region" description="Polar residues" evidence="4">
    <location>
        <begin position="434"/>
        <end position="443"/>
    </location>
</feature>
<feature type="compositionally biased region" description="Low complexity" evidence="4">
    <location>
        <begin position="497"/>
        <end position="510"/>
    </location>
</feature>
<feature type="modified residue" description="Phosphoserine" evidence="1">
    <location>
        <position position="389"/>
    </location>
</feature>
<feature type="splice variant" id="VSP_021176" description="In isoform 2." evidence="5">
    <location>
        <begin position="1"/>
        <end position="35"/>
    </location>
</feature>
<feature type="splice variant" id="VSP_021177" description="In isoform 2." evidence="5">
    <original>VTPMEKPDIPSPSLHSREKEPDSDPKLQNPPVSLSSRQRAQPWRGLHLTLPAPGIVVEVACGQGHLRVVTPPLACPYPHSSCYLLPELSPVTSSSPSSLCPEVTSSKVGPDMSLQEKGSLTHHS</original>
    <variation>SPRSSGRFTKKKPLPSISSKSSMSHFSNRLYEELADFLTQQAASLLIRKYEFEKDLSRQLSPLEPKLSVSAGTGMGSSLPKSKDTDSEGHDEAEVEDEDEDEYKDEDQDEDKEEDGVQSLPEPGEEASVSHSVDVGHSDPP</variation>
    <location>
        <begin position="405"/>
        <end position="528"/>
    </location>
</feature>
<feature type="sequence conflict" description="In Ref. 1; BAB62943." evidence="6" ref="1">
    <original>L</original>
    <variation>P</variation>
    <location>
        <position position="42"/>
    </location>
</feature>
<feature type="sequence conflict" description="In Ref. 1; BAB62943." evidence="6" ref="1">
    <original>R</original>
    <variation>K</variation>
    <location>
        <position position="192"/>
    </location>
</feature>
<feature type="sequence conflict" description="In Ref. 1; BAB62943." evidence="6" ref="1">
    <original>K</original>
    <variation>E</variation>
    <location>
        <position position="362"/>
    </location>
</feature>
<feature type="sequence conflict" description="In Ref. 1; BAB62943." evidence="6" ref="1">
    <original>T</original>
    <variation>M</variation>
    <location>
        <position position="378"/>
    </location>
</feature>
<evidence type="ECO:0000250" key="1">
    <source>
        <dbReference type="UniProtKB" id="Q4V8B5"/>
    </source>
</evidence>
<evidence type="ECO:0000250" key="2">
    <source>
        <dbReference type="UniProtKB" id="Q8IYX3"/>
    </source>
</evidence>
<evidence type="ECO:0000255" key="3"/>
<evidence type="ECO:0000256" key="4">
    <source>
        <dbReference type="SAM" id="MobiDB-lite"/>
    </source>
</evidence>
<evidence type="ECO:0000303" key="5">
    <source>
    </source>
</evidence>
<evidence type="ECO:0000305" key="6"/>
<sequence>MARCRHHSGYVADDEASHSMCSARVQLPKKPLVPEMGPASKLGHVPHPPSTCGSSALQNQRRNKRHPQPFSHFLDFLTESHVLDSLETVVEKATERMAAMKTEAGVPLVEVQDPVEVPSGGRRAHARPSLSTVHRHRVRPTLCTGHPNNYPSSSSSMSDSHSSLMAGWLGSHSRDSDLGAQGLGSLPPVKDRLLLEKNLKRLLQLERKGKGLSQSCSKRDSLLWDLLGSQTSFQWTQEQPLSWFSELLGSSSGVPEASEPRPGEQEPICKREFNKEIKSLLSQLESLDLPGYCPLREPHRTLNFLADHRLFPALQSVVNQAVDKLRGARCRDGRPLFPTSLEPPSELQVQRNLPPLGSEPAKPTNSGQPHPTVSSPKTPQRKHKDRGGSPSMSSAQVATRFKLKVTPMEKPDIPSPSLHSREKEPDSDPKLQNPPVSLSSRQRAQPWRGLHLTLPAPGIVVEVACGQGHLRVVTPPLACPYPHSSCYLLPELSPVTSSSPSSLCPEVTSSKVGPDMSLQEKGSLTHHS</sequence>
<organism>
    <name type="scientific">Macaca fascicularis</name>
    <name type="common">Crab-eating macaque</name>
    <name type="synonym">Cynomolgus monkey</name>
    <dbReference type="NCBI Taxonomy" id="9541"/>
    <lineage>
        <taxon>Eukaryota</taxon>
        <taxon>Metazoa</taxon>
        <taxon>Chordata</taxon>
        <taxon>Craniata</taxon>
        <taxon>Vertebrata</taxon>
        <taxon>Euteleostomi</taxon>
        <taxon>Mammalia</taxon>
        <taxon>Eutheria</taxon>
        <taxon>Euarchontoglires</taxon>
        <taxon>Primates</taxon>
        <taxon>Haplorrhini</taxon>
        <taxon>Catarrhini</taxon>
        <taxon>Cercopithecidae</taxon>
        <taxon>Cercopithecinae</taxon>
        <taxon>Macaca</taxon>
    </lineage>
</organism>
<keyword id="KW-0025">Alternative splicing</keyword>
<keyword id="KW-0175">Coiled coil</keyword>
<keyword id="KW-0963">Cytoplasm</keyword>
<keyword id="KW-0206">Cytoskeleton</keyword>
<keyword id="KW-0597">Phosphoprotein</keyword>
<keyword id="KW-1185">Reference proteome</keyword>
<name>CC116_MACFA</name>
<comment type="subcellular location">
    <subcellularLocation>
        <location evidence="2">Cytoplasm</location>
        <location evidence="2">Cytoskeleton</location>
        <location evidence="2">Microtubule organizing center</location>
        <location evidence="2">Centrosome</location>
    </subcellularLocation>
</comment>
<comment type="alternative products">
    <event type="alternative splicing"/>
    <isoform>
        <id>Q95LR6-1</id>
        <name>1</name>
        <sequence type="displayed"/>
    </isoform>
    <isoform>
        <id>Q95LR6-2</id>
        <name>2</name>
        <sequence type="described" ref="VSP_021176 VSP_021177"/>
    </isoform>
</comment>
<reference key="1">
    <citation type="journal article" date="2002" name="BMC Genomics">
        <title>Cynomolgus monkey testicular cDNAs for discovery of novel human genes in the human genome sequence.</title>
        <authorList>
            <person name="Osada N."/>
            <person name="Hida M."/>
            <person name="Kusuda J."/>
            <person name="Tanuma R."/>
            <person name="Hirata M."/>
            <person name="Suto Y."/>
            <person name="Hirai M."/>
            <person name="Terao K."/>
            <person name="Sugano S."/>
            <person name="Hashimoto K."/>
        </authorList>
    </citation>
    <scope>NUCLEOTIDE SEQUENCE [LARGE SCALE MRNA] (ISOFORMS 1 AND 2)</scope>
    <source>
        <tissue>Testis</tissue>
    </source>
</reference>
<proteinExistence type="evidence at transcript level"/>
<protein>
    <recommendedName>
        <fullName>Coiled-coil domain-containing protein 116</fullName>
    </recommendedName>
</protein>
<gene>
    <name type="primary">CCDC116</name>
    <name type="ORF">QtsA-10747</name>
    <name type="ORF">QtsA-19551</name>
</gene>
<accession>Q95LR6</accession>
<accession>Q95K29</accession>
<dbReference type="EMBL" id="AB069998">
    <property type="protein sequence ID" value="BAB62943.1"/>
    <property type="molecule type" value="mRNA"/>
</dbReference>
<dbReference type="EMBL" id="AB071126">
    <property type="protein sequence ID" value="BAB64520.1"/>
    <property type="molecule type" value="mRNA"/>
</dbReference>
<dbReference type="SMR" id="Q95LR6"/>
<dbReference type="STRING" id="9541.ENSMFAP00000034955"/>
<dbReference type="eggNOG" id="ENOG502STQK">
    <property type="taxonomic scope" value="Eukaryota"/>
</dbReference>
<dbReference type="Proteomes" id="UP000233100">
    <property type="component" value="Unplaced"/>
</dbReference>
<dbReference type="GO" id="GO:0005813">
    <property type="term" value="C:centrosome"/>
    <property type="evidence" value="ECO:0000250"/>
    <property type="project" value="UniProtKB"/>
</dbReference>
<dbReference type="GO" id="GO:0005737">
    <property type="term" value="C:cytoplasm"/>
    <property type="evidence" value="ECO:0007669"/>
    <property type="project" value="UniProtKB-KW"/>
</dbReference>
<dbReference type="InterPro" id="IPR031532">
    <property type="entry name" value="DUF4702"/>
</dbReference>
<dbReference type="PANTHER" id="PTHR36861">
    <property type="entry name" value="COILED-COIL DOMAIN-CONTAINING PROTEIN 116"/>
    <property type="match status" value="1"/>
</dbReference>
<dbReference type="PANTHER" id="PTHR36861:SF1">
    <property type="entry name" value="COILED-COIL DOMAIN-CONTAINING PROTEIN 116"/>
    <property type="match status" value="1"/>
</dbReference>
<dbReference type="Pfam" id="PF15774">
    <property type="entry name" value="DUF4702"/>
    <property type="match status" value="1"/>
</dbReference>